<keyword id="KW-0030">Aminoacyl-tRNA synthetase</keyword>
<keyword id="KW-0067">ATP-binding</keyword>
<keyword id="KW-0963">Cytoplasm</keyword>
<keyword id="KW-0436">Ligase</keyword>
<keyword id="KW-0547">Nucleotide-binding</keyword>
<keyword id="KW-0648">Protein biosynthesis</keyword>
<proteinExistence type="inferred from homology"/>
<protein>
    <recommendedName>
        <fullName evidence="1">Serine--tRNA ligase</fullName>
        <ecNumber evidence="1">6.1.1.11</ecNumber>
    </recommendedName>
    <alternativeName>
        <fullName evidence="1">Seryl-tRNA synthetase</fullName>
        <shortName evidence="1">SerRS</shortName>
    </alternativeName>
    <alternativeName>
        <fullName evidence="1">Seryl-tRNA(Ser/Sec) synthetase</fullName>
    </alternativeName>
</protein>
<gene>
    <name evidence="1" type="primary">serS</name>
    <name type="ordered locus">NTHI0200</name>
</gene>
<reference key="1">
    <citation type="journal article" date="2005" name="J. Bacteriol.">
        <title>Genomic sequence of an otitis media isolate of nontypeable Haemophilus influenzae: comparative study with H. influenzae serotype d, strain KW20.</title>
        <authorList>
            <person name="Harrison A."/>
            <person name="Dyer D.W."/>
            <person name="Gillaspy A."/>
            <person name="Ray W.C."/>
            <person name="Mungur R."/>
            <person name="Carson M.B."/>
            <person name="Zhong H."/>
            <person name="Gipson J."/>
            <person name="Gipson M."/>
            <person name="Johnson L.S."/>
            <person name="Lewis L."/>
            <person name="Bakaletz L.O."/>
            <person name="Munson R.S. Jr."/>
        </authorList>
    </citation>
    <scope>NUCLEOTIDE SEQUENCE [LARGE SCALE GENOMIC DNA]</scope>
    <source>
        <strain>86-028NP</strain>
    </source>
</reference>
<feature type="chain" id="PRO_1000019690" description="Serine--tRNA ligase">
    <location>
        <begin position="1"/>
        <end position="429"/>
    </location>
</feature>
<feature type="binding site" evidence="1">
    <location>
        <begin position="235"/>
        <end position="237"/>
    </location>
    <ligand>
        <name>L-serine</name>
        <dbReference type="ChEBI" id="CHEBI:33384"/>
    </ligand>
</feature>
<feature type="binding site" evidence="1">
    <location>
        <begin position="266"/>
        <end position="268"/>
    </location>
    <ligand>
        <name>ATP</name>
        <dbReference type="ChEBI" id="CHEBI:30616"/>
    </ligand>
</feature>
<feature type="binding site" evidence="1">
    <location>
        <position position="289"/>
    </location>
    <ligand>
        <name>L-serine</name>
        <dbReference type="ChEBI" id="CHEBI:33384"/>
    </ligand>
</feature>
<feature type="binding site" evidence="1">
    <location>
        <begin position="353"/>
        <end position="356"/>
    </location>
    <ligand>
        <name>ATP</name>
        <dbReference type="ChEBI" id="CHEBI:30616"/>
    </ligand>
</feature>
<feature type="binding site" evidence="1">
    <location>
        <position position="389"/>
    </location>
    <ligand>
        <name>L-serine</name>
        <dbReference type="ChEBI" id="CHEBI:33384"/>
    </ligand>
</feature>
<sequence>MIDPNLLRNNLAEVAEKLKVKRNFMLDTEKLTALEDQRKNLQVTTENLQAERNARSKAIGAAKVRGEDIAPLLAEMDDMGNQLTEAKAQLDAVLAEINQIALSIPNLPADEVPLGKDDTENKEILRWGTPHTFDFEVKDHITLGEEANGLDFAAGAKLAGARFAVMKGQIAKMHRALAQFMLDLHTEQHGYLETYVPYLVNHATLYGTGQLPKFGEDLFHTLALEGEQPYALIPTAEVPVTNLVRDVIIDEAELPIKMTAHTPCFRSEAGSYGRDTRGLIRMHQFDKVEMVQIVDPDKSMEALEELTGHAEKVLQLLNLPYRKVLLCTGDMGFGSCKTYDLEVWLPAQNTYREISSCSNMWDFQARRMQARCKAKGDKKTRLVHTLNGSGLAVGRTLVAVLENYQNADGSITVPEELRPYMGGLDVIGK</sequence>
<organism>
    <name type="scientific">Haemophilus influenzae (strain 86-028NP)</name>
    <dbReference type="NCBI Taxonomy" id="281310"/>
    <lineage>
        <taxon>Bacteria</taxon>
        <taxon>Pseudomonadati</taxon>
        <taxon>Pseudomonadota</taxon>
        <taxon>Gammaproteobacteria</taxon>
        <taxon>Pasteurellales</taxon>
        <taxon>Pasteurellaceae</taxon>
        <taxon>Haemophilus</taxon>
    </lineage>
</organism>
<dbReference type="EC" id="6.1.1.11" evidence="1"/>
<dbReference type="EMBL" id="CP000057">
    <property type="protein sequence ID" value="AAX87177.1"/>
    <property type="molecule type" value="Genomic_DNA"/>
</dbReference>
<dbReference type="RefSeq" id="WP_011271887.1">
    <property type="nucleotide sequence ID" value="NC_007146.2"/>
</dbReference>
<dbReference type="SMR" id="Q4QP70"/>
<dbReference type="GeneID" id="93219040"/>
<dbReference type="KEGG" id="hit:NTHI0200"/>
<dbReference type="HOGENOM" id="CLU_023797_1_1_6"/>
<dbReference type="UniPathway" id="UPA00906">
    <property type="reaction ID" value="UER00895"/>
</dbReference>
<dbReference type="Proteomes" id="UP000002525">
    <property type="component" value="Chromosome"/>
</dbReference>
<dbReference type="GO" id="GO:0005737">
    <property type="term" value="C:cytoplasm"/>
    <property type="evidence" value="ECO:0007669"/>
    <property type="project" value="UniProtKB-SubCell"/>
</dbReference>
<dbReference type="GO" id="GO:0005524">
    <property type="term" value="F:ATP binding"/>
    <property type="evidence" value="ECO:0007669"/>
    <property type="project" value="UniProtKB-UniRule"/>
</dbReference>
<dbReference type="GO" id="GO:0004828">
    <property type="term" value="F:serine-tRNA ligase activity"/>
    <property type="evidence" value="ECO:0007669"/>
    <property type="project" value="UniProtKB-UniRule"/>
</dbReference>
<dbReference type="GO" id="GO:0016260">
    <property type="term" value="P:selenocysteine biosynthetic process"/>
    <property type="evidence" value="ECO:0007669"/>
    <property type="project" value="UniProtKB-UniRule"/>
</dbReference>
<dbReference type="GO" id="GO:0006434">
    <property type="term" value="P:seryl-tRNA aminoacylation"/>
    <property type="evidence" value="ECO:0007669"/>
    <property type="project" value="UniProtKB-UniRule"/>
</dbReference>
<dbReference type="CDD" id="cd00770">
    <property type="entry name" value="SerRS_core"/>
    <property type="match status" value="1"/>
</dbReference>
<dbReference type="Gene3D" id="3.30.930.10">
    <property type="entry name" value="Bira Bifunctional Protein, Domain 2"/>
    <property type="match status" value="1"/>
</dbReference>
<dbReference type="Gene3D" id="1.10.287.40">
    <property type="entry name" value="Serine-tRNA synthetase, tRNA binding domain"/>
    <property type="match status" value="1"/>
</dbReference>
<dbReference type="HAMAP" id="MF_00176">
    <property type="entry name" value="Ser_tRNA_synth_type1"/>
    <property type="match status" value="1"/>
</dbReference>
<dbReference type="InterPro" id="IPR002314">
    <property type="entry name" value="aa-tRNA-synt_IIb"/>
</dbReference>
<dbReference type="InterPro" id="IPR006195">
    <property type="entry name" value="aa-tRNA-synth_II"/>
</dbReference>
<dbReference type="InterPro" id="IPR045864">
    <property type="entry name" value="aa-tRNA-synth_II/BPL/LPL"/>
</dbReference>
<dbReference type="InterPro" id="IPR002317">
    <property type="entry name" value="Ser-tRNA-ligase_type_1"/>
</dbReference>
<dbReference type="InterPro" id="IPR015866">
    <property type="entry name" value="Ser-tRNA-synth_1_N"/>
</dbReference>
<dbReference type="InterPro" id="IPR042103">
    <property type="entry name" value="SerRS_1_N_sf"/>
</dbReference>
<dbReference type="InterPro" id="IPR033729">
    <property type="entry name" value="SerRS_core"/>
</dbReference>
<dbReference type="InterPro" id="IPR010978">
    <property type="entry name" value="tRNA-bd_arm"/>
</dbReference>
<dbReference type="NCBIfam" id="TIGR00414">
    <property type="entry name" value="serS"/>
    <property type="match status" value="1"/>
</dbReference>
<dbReference type="PANTHER" id="PTHR43697:SF1">
    <property type="entry name" value="SERINE--TRNA LIGASE"/>
    <property type="match status" value="1"/>
</dbReference>
<dbReference type="PANTHER" id="PTHR43697">
    <property type="entry name" value="SERYL-TRNA SYNTHETASE"/>
    <property type="match status" value="1"/>
</dbReference>
<dbReference type="Pfam" id="PF02403">
    <property type="entry name" value="Seryl_tRNA_N"/>
    <property type="match status" value="1"/>
</dbReference>
<dbReference type="Pfam" id="PF00587">
    <property type="entry name" value="tRNA-synt_2b"/>
    <property type="match status" value="1"/>
</dbReference>
<dbReference type="PIRSF" id="PIRSF001529">
    <property type="entry name" value="Ser-tRNA-synth_IIa"/>
    <property type="match status" value="1"/>
</dbReference>
<dbReference type="PRINTS" id="PR00981">
    <property type="entry name" value="TRNASYNTHSER"/>
</dbReference>
<dbReference type="SUPFAM" id="SSF55681">
    <property type="entry name" value="Class II aaRS and biotin synthetases"/>
    <property type="match status" value="1"/>
</dbReference>
<dbReference type="SUPFAM" id="SSF46589">
    <property type="entry name" value="tRNA-binding arm"/>
    <property type="match status" value="1"/>
</dbReference>
<dbReference type="PROSITE" id="PS50862">
    <property type="entry name" value="AA_TRNA_LIGASE_II"/>
    <property type="match status" value="1"/>
</dbReference>
<evidence type="ECO:0000255" key="1">
    <source>
        <dbReference type="HAMAP-Rule" id="MF_00176"/>
    </source>
</evidence>
<accession>Q4QP70</accession>
<comment type="function">
    <text evidence="1">Catalyzes the attachment of serine to tRNA(Ser). Is also able to aminoacylate tRNA(Sec) with serine, to form the misacylated tRNA L-seryl-tRNA(Sec), which will be further converted into selenocysteinyl-tRNA(Sec).</text>
</comment>
<comment type="catalytic activity">
    <reaction evidence="1">
        <text>tRNA(Ser) + L-serine + ATP = L-seryl-tRNA(Ser) + AMP + diphosphate + H(+)</text>
        <dbReference type="Rhea" id="RHEA:12292"/>
        <dbReference type="Rhea" id="RHEA-COMP:9669"/>
        <dbReference type="Rhea" id="RHEA-COMP:9703"/>
        <dbReference type="ChEBI" id="CHEBI:15378"/>
        <dbReference type="ChEBI" id="CHEBI:30616"/>
        <dbReference type="ChEBI" id="CHEBI:33019"/>
        <dbReference type="ChEBI" id="CHEBI:33384"/>
        <dbReference type="ChEBI" id="CHEBI:78442"/>
        <dbReference type="ChEBI" id="CHEBI:78533"/>
        <dbReference type="ChEBI" id="CHEBI:456215"/>
        <dbReference type="EC" id="6.1.1.11"/>
    </reaction>
</comment>
<comment type="catalytic activity">
    <reaction evidence="1">
        <text>tRNA(Sec) + L-serine + ATP = L-seryl-tRNA(Sec) + AMP + diphosphate + H(+)</text>
        <dbReference type="Rhea" id="RHEA:42580"/>
        <dbReference type="Rhea" id="RHEA-COMP:9742"/>
        <dbReference type="Rhea" id="RHEA-COMP:10128"/>
        <dbReference type="ChEBI" id="CHEBI:15378"/>
        <dbReference type="ChEBI" id="CHEBI:30616"/>
        <dbReference type="ChEBI" id="CHEBI:33019"/>
        <dbReference type="ChEBI" id="CHEBI:33384"/>
        <dbReference type="ChEBI" id="CHEBI:78442"/>
        <dbReference type="ChEBI" id="CHEBI:78533"/>
        <dbReference type="ChEBI" id="CHEBI:456215"/>
        <dbReference type="EC" id="6.1.1.11"/>
    </reaction>
</comment>
<comment type="pathway">
    <text evidence="1">Aminoacyl-tRNA biosynthesis; selenocysteinyl-tRNA(Sec) biosynthesis; L-seryl-tRNA(Sec) from L-serine and tRNA(Sec): step 1/1.</text>
</comment>
<comment type="subunit">
    <text evidence="1">Homodimer. The tRNA molecule binds across the dimer.</text>
</comment>
<comment type="subcellular location">
    <subcellularLocation>
        <location evidence="1">Cytoplasm</location>
    </subcellularLocation>
</comment>
<comment type="domain">
    <text evidence="1">Consists of two distinct domains, a catalytic core and a N-terminal extension that is involved in tRNA binding.</text>
</comment>
<comment type="similarity">
    <text evidence="1">Belongs to the class-II aminoacyl-tRNA synthetase family. Type-1 seryl-tRNA synthetase subfamily.</text>
</comment>
<name>SYS_HAEI8</name>